<evidence type="ECO:0000255" key="1">
    <source>
        <dbReference type="HAMAP-Rule" id="MF_00163"/>
    </source>
</evidence>
<accession>A1T320</accession>
<keyword id="KW-0378">Hydrolase</keyword>
<keyword id="KW-0408">Iron</keyword>
<keyword id="KW-0479">Metal-binding</keyword>
<keyword id="KW-0648">Protein biosynthesis</keyword>
<gene>
    <name evidence="1" type="primary">def</name>
    <name type="ordered locus">Mvan_0732</name>
</gene>
<feature type="chain" id="PRO_0000301065" description="Peptide deformylase">
    <location>
        <begin position="1"/>
        <end position="197"/>
    </location>
</feature>
<feature type="active site" evidence="1">
    <location>
        <position position="149"/>
    </location>
</feature>
<feature type="binding site" evidence="1">
    <location>
        <position position="106"/>
    </location>
    <ligand>
        <name>Fe cation</name>
        <dbReference type="ChEBI" id="CHEBI:24875"/>
    </ligand>
</feature>
<feature type="binding site" evidence="1">
    <location>
        <position position="148"/>
    </location>
    <ligand>
        <name>Fe cation</name>
        <dbReference type="ChEBI" id="CHEBI:24875"/>
    </ligand>
</feature>
<feature type="binding site" evidence="1">
    <location>
        <position position="152"/>
    </location>
    <ligand>
        <name>Fe cation</name>
        <dbReference type="ChEBI" id="CHEBI:24875"/>
    </ligand>
</feature>
<organism>
    <name type="scientific">Mycolicibacterium vanbaalenii (strain DSM 7251 / JCM 13017 / BCRC 16820 / KCTC 9966 / NRRL B-24157 / PYR-1)</name>
    <name type="common">Mycobacterium vanbaalenii</name>
    <dbReference type="NCBI Taxonomy" id="350058"/>
    <lineage>
        <taxon>Bacteria</taxon>
        <taxon>Bacillati</taxon>
        <taxon>Actinomycetota</taxon>
        <taxon>Actinomycetes</taxon>
        <taxon>Mycobacteriales</taxon>
        <taxon>Mycobacteriaceae</taxon>
        <taxon>Mycolicibacterium</taxon>
    </lineage>
</organism>
<reference key="1">
    <citation type="submission" date="2006-12" db="EMBL/GenBank/DDBJ databases">
        <title>Complete sequence of Mycobacterium vanbaalenii PYR-1.</title>
        <authorList>
            <consortium name="US DOE Joint Genome Institute"/>
            <person name="Copeland A."/>
            <person name="Lucas S."/>
            <person name="Lapidus A."/>
            <person name="Barry K."/>
            <person name="Detter J.C."/>
            <person name="Glavina del Rio T."/>
            <person name="Hammon N."/>
            <person name="Israni S."/>
            <person name="Dalin E."/>
            <person name="Tice H."/>
            <person name="Pitluck S."/>
            <person name="Singan V."/>
            <person name="Schmutz J."/>
            <person name="Larimer F."/>
            <person name="Land M."/>
            <person name="Hauser L."/>
            <person name="Kyrpides N."/>
            <person name="Anderson I.J."/>
            <person name="Miller C."/>
            <person name="Richardson P."/>
        </authorList>
    </citation>
    <scope>NUCLEOTIDE SEQUENCE [LARGE SCALE GENOMIC DNA]</scope>
    <source>
        <strain>DSM 7251 / JCM 13017 / BCRC 16820 / KCTC 9966 / NRRL B-24157 / PYR-1</strain>
    </source>
</reference>
<protein>
    <recommendedName>
        <fullName evidence="1">Peptide deformylase</fullName>
        <shortName evidence="1">PDF</shortName>
        <ecNumber evidence="1">3.5.1.88</ecNumber>
    </recommendedName>
    <alternativeName>
        <fullName evidence="1">Polypeptide deformylase</fullName>
    </alternativeName>
</protein>
<comment type="function">
    <text evidence="1">Removes the formyl group from the N-terminal Met of newly synthesized proteins. Requires at least a dipeptide for an efficient rate of reaction. N-terminal L-methionine is a prerequisite for activity but the enzyme has broad specificity at other positions.</text>
</comment>
<comment type="catalytic activity">
    <reaction evidence="1">
        <text>N-terminal N-formyl-L-methionyl-[peptide] + H2O = N-terminal L-methionyl-[peptide] + formate</text>
        <dbReference type="Rhea" id="RHEA:24420"/>
        <dbReference type="Rhea" id="RHEA-COMP:10639"/>
        <dbReference type="Rhea" id="RHEA-COMP:10640"/>
        <dbReference type="ChEBI" id="CHEBI:15377"/>
        <dbReference type="ChEBI" id="CHEBI:15740"/>
        <dbReference type="ChEBI" id="CHEBI:49298"/>
        <dbReference type="ChEBI" id="CHEBI:64731"/>
        <dbReference type="EC" id="3.5.1.88"/>
    </reaction>
</comment>
<comment type="cofactor">
    <cofactor evidence="1">
        <name>Fe(2+)</name>
        <dbReference type="ChEBI" id="CHEBI:29033"/>
    </cofactor>
    <text evidence="1">Binds 1 Fe(2+) ion.</text>
</comment>
<comment type="similarity">
    <text evidence="1">Belongs to the polypeptide deformylase family.</text>
</comment>
<proteinExistence type="inferred from homology"/>
<name>DEF_MYCVP</name>
<sequence>MAVRPIRIVGDPVLHTATEPVPVGADGSLPADLADLITDMYDTMDAAHGVGLAANQIGVSKRVFVYDCADERKKTTRRRGVVINPVLETSEIPETMPDPEDDDEGCLSVPGESFPTGRADWARVTGLDADGTPITLEGTDLFARMLQHETGHLDGFLYLDRLIGRNARSAKKTVKSHGWGVPGLSWMPGEDPDPFGH</sequence>
<dbReference type="EC" id="3.5.1.88" evidence="1"/>
<dbReference type="EMBL" id="CP000511">
    <property type="protein sequence ID" value="ABM11570.1"/>
    <property type="molecule type" value="Genomic_DNA"/>
</dbReference>
<dbReference type="RefSeq" id="WP_011778007.1">
    <property type="nucleotide sequence ID" value="NZ_JACKSD010000046.1"/>
</dbReference>
<dbReference type="SMR" id="A1T320"/>
<dbReference type="STRING" id="350058.Mvan_0732"/>
<dbReference type="KEGG" id="mva:Mvan_0732"/>
<dbReference type="eggNOG" id="COG0242">
    <property type="taxonomic scope" value="Bacteria"/>
</dbReference>
<dbReference type="HOGENOM" id="CLU_061901_1_2_11"/>
<dbReference type="Proteomes" id="UP000009159">
    <property type="component" value="Chromosome"/>
</dbReference>
<dbReference type="GO" id="GO:0046872">
    <property type="term" value="F:metal ion binding"/>
    <property type="evidence" value="ECO:0007669"/>
    <property type="project" value="UniProtKB-KW"/>
</dbReference>
<dbReference type="GO" id="GO:0042586">
    <property type="term" value="F:peptide deformylase activity"/>
    <property type="evidence" value="ECO:0007669"/>
    <property type="project" value="UniProtKB-UniRule"/>
</dbReference>
<dbReference type="GO" id="GO:0043686">
    <property type="term" value="P:co-translational protein modification"/>
    <property type="evidence" value="ECO:0007669"/>
    <property type="project" value="TreeGrafter"/>
</dbReference>
<dbReference type="GO" id="GO:0006412">
    <property type="term" value="P:translation"/>
    <property type="evidence" value="ECO:0007669"/>
    <property type="project" value="UniProtKB-UniRule"/>
</dbReference>
<dbReference type="CDD" id="cd00487">
    <property type="entry name" value="Pep_deformylase"/>
    <property type="match status" value="1"/>
</dbReference>
<dbReference type="Gene3D" id="3.90.45.10">
    <property type="entry name" value="Peptide deformylase"/>
    <property type="match status" value="1"/>
</dbReference>
<dbReference type="HAMAP" id="MF_00163">
    <property type="entry name" value="Pep_deformylase"/>
    <property type="match status" value="1"/>
</dbReference>
<dbReference type="InterPro" id="IPR023635">
    <property type="entry name" value="Peptide_deformylase"/>
</dbReference>
<dbReference type="InterPro" id="IPR036821">
    <property type="entry name" value="Peptide_deformylase_sf"/>
</dbReference>
<dbReference type="NCBIfam" id="TIGR00079">
    <property type="entry name" value="pept_deformyl"/>
    <property type="match status" value="1"/>
</dbReference>
<dbReference type="NCBIfam" id="NF001159">
    <property type="entry name" value="PRK00150.1-3"/>
    <property type="match status" value="1"/>
</dbReference>
<dbReference type="NCBIfam" id="NF009483">
    <property type="entry name" value="PRK12846.1-4"/>
    <property type="match status" value="1"/>
</dbReference>
<dbReference type="PANTHER" id="PTHR10458">
    <property type="entry name" value="PEPTIDE DEFORMYLASE"/>
    <property type="match status" value="1"/>
</dbReference>
<dbReference type="PANTHER" id="PTHR10458:SF2">
    <property type="entry name" value="PEPTIDE DEFORMYLASE, MITOCHONDRIAL"/>
    <property type="match status" value="1"/>
</dbReference>
<dbReference type="Pfam" id="PF01327">
    <property type="entry name" value="Pep_deformylase"/>
    <property type="match status" value="1"/>
</dbReference>
<dbReference type="PIRSF" id="PIRSF004749">
    <property type="entry name" value="Pep_def"/>
    <property type="match status" value="1"/>
</dbReference>
<dbReference type="PRINTS" id="PR01576">
    <property type="entry name" value="PDEFORMYLASE"/>
</dbReference>
<dbReference type="SUPFAM" id="SSF56420">
    <property type="entry name" value="Peptide deformylase"/>
    <property type="match status" value="1"/>
</dbReference>